<reference key="1">
    <citation type="journal article" date="2016" name="Proc. Natl. Acad. Sci. U.S.A.">
        <title>Biosynthetic investigation of phomopsins reveals a widespread pathway for ribosomal natural products in Ascomycetes.</title>
        <authorList>
            <person name="Ding W."/>
            <person name="Liu W.Q."/>
            <person name="Jia Y."/>
            <person name="Li Y."/>
            <person name="van der Donk W.A."/>
            <person name="Zhang Q."/>
        </authorList>
    </citation>
    <scope>NUCLEOTIDE SEQUENCE [GENOMIC DNA]</scope>
    <scope>FUNCTION</scope>
    <source>
        <strain>ATCC 26115 / IMI 115107 / C 1557</strain>
    </source>
</reference>
<reference key="2">
    <citation type="journal article" date="2021" name="Angew. Chem. Int. Ed.">
        <title>Biosynthetic studies of phomopsins unveil posttranslational installation of dehydroamino acids by ustYa family proteins.</title>
        <authorList>
            <person name="Sogahata K."/>
            <person name="Ozaki T."/>
            <person name="Igarashi Y."/>
            <person name="Naganuma Y."/>
            <person name="Liu C."/>
            <person name="Minami A."/>
            <person name="Oikawa H."/>
        </authorList>
    </citation>
    <scope>NOMENCLATURE</scope>
    <source>
        <strain>ATCC 26115 / IMI 115107 / C 1557</strain>
    </source>
</reference>
<dbReference type="EMBL" id="KU645826">
    <property type="protein sequence ID" value="AMR44274.1"/>
    <property type="molecule type" value="Genomic_DNA"/>
</dbReference>
<dbReference type="SMR" id="A0A142I722"/>
<dbReference type="CDD" id="cd02231">
    <property type="entry name" value="cupin_BLL6423-like"/>
    <property type="match status" value="1"/>
</dbReference>
<dbReference type="Gene3D" id="2.60.120.10">
    <property type="entry name" value="Jelly Rolls"/>
    <property type="match status" value="1"/>
</dbReference>
<dbReference type="InterPro" id="IPR013096">
    <property type="entry name" value="Cupin_2"/>
</dbReference>
<dbReference type="InterPro" id="IPR047142">
    <property type="entry name" value="OryJ/VirC-like"/>
</dbReference>
<dbReference type="InterPro" id="IPR014710">
    <property type="entry name" value="RmlC-like_jellyroll"/>
</dbReference>
<dbReference type="InterPro" id="IPR011051">
    <property type="entry name" value="RmlC_Cupin_sf"/>
</dbReference>
<dbReference type="PANTHER" id="PTHR36156:SF2">
    <property type="entry name" value="CUPIN TYPE-2 DOMAIN-CONTAINING PROTEIN"/>
    <property type="match status" value="1"/>
</dbReference>
<dbReference type="PANTHER" id="PTHR36156">
    <property type="entry name" value="SLR2101 PROTEIN"/>
    <property type="match status" value="1"/>
</dbReference>
<dbReference type="Pfam" id="PF07883">
    <property type="entry name" value="Cupin_2"/>
    <property type="match status" value="1"/>
</dbReference>
<dbReference type="SUPFAM" id="SSF51182">
    <property type="entry name" value="RmlC-like cupins"/>
    <property type="match status" value="1"/>
</dbReference>
<accession>A0A142I722</accession>
<comment type="function">
    <text evidence="1 5">Part of the gene cluster that mediates the biosynthesis of the phomopsins, a group of hexapeptide mycotoxins which infects lupins and causes lupinosis disease in livestock (PubMed:34608734). The role of phomC' within the phomopsins biosynthesis pathway has still to be determined (Probable). The pathway starts with the processing of the precursor phomA by several endopeptidases including kexin proteases as well as the cluster-specific S41 family peptidase phomP1 and the oligopeptidase phomG to produce 10 identical copies of the hexapeptide Tyr-Val-Ile-Pro-Ile-Asp. After being excised from the precursor peptide, the core peptides are cyclized and modified post-translationally by enzymes encoded within the gene cluster. The timing and order of proteolysis of the phomA precursor and PTMs are still unknown. Two tyrosinase-like enzymes, phomQ1 and phomQ2, catalyze the chlorination and hydroxylation of Tyr, respectively. PhomYb, is proposed to be involved in the construction of the macrocyclic structure. The other 4 ustYa family proteins may be involved in PTMs that generate the unique structure of phomopsin A. PhomYa is required for the hydroxylation of C-beta of Tyr. PhomYc, phomYd, and phomYe are responsible for the biosynthesis of 2,3-dehydroisoleucine (dIle), 2,3-dehydroaspartic acid (dAsp), and 3,4-dehydroproline (dPro), respectively. While dIle formation by phomYc is indispensable for the installation of dAsp by phomYd, the order of the other PTMs have not been elucidated yet. Most of the biosynthetic enzymes likely have broad substrate specificity, and thus, there might be a metabolic grid from a precursor to phomopsin A. The enzyme(s) responsible for the biosynthesis of 3,4-dehydrovaline (dVal) have also not been identified yet. Finally, phomM acts as an S-adenosylmethionine-dependent alpha-N-methyltransferase that catalyzes two successive N-methylation reactions, converting N-desmethyl-phomopsin A to phomopsin A and phomopsin A further to an N,N-dimethylated congener called phomopsin E (Probable).</text>
</comment>
<comment type="similarity">
    <text evidence="4">Belongs to the oryJ family.</text>
</comment>
<sequence>MAKSQNKESPELRTPNRFITDHDASGLSVFNTSIPDALPAQVIGGRDRFHLAYATTTSPVDLTNQSDIVTYSSFLSTPPGISLPGGSVLRIVDVRPGGESLMHRTESIDYGVVLDGEIDLVLDSGESRILKRGDVAVQRGTNHLWRNRSHTAWGRMVFVTLEAKPIEIDGKLLGGVTGLGMDDTSPAGN</sequence>
<feature type="chain" id="PRO_0000458403" description="Phomopsin biosynthesis cluster protein C'">
    <location>
        <begin position="1"/>
        <end position="189"/>
    </location>
</feature>
<keyword id="KW-0843">Virulence</keyword>
<name>PHOC2_DIALO</name>
<evidence type="ECO:0000269" key="1">
    <source>
    </source>
</evidence>
<evidence type="ECO:0000303" key="2">
    <source>
    </source>
</evidence>
<evidence type="ECO:0000303" key="3">
    <source>
    </source>
</evidence>
<evidence type="ECO:0000305" key="4"/>
<evidence type="ECO:0000305" key="5">
    <source>
    </source>
</evidence>
<organism>
    <name type="scientific">Diaporthe leptostromiformis</name>
    <name type="common">Lupinosis disease fungus</name>
    <name type="synonym">Phomopsis leptostromiformis</name>
    <dbReference type="NCBI Taxonomy" id="291059"/>
    <lineage>
        <taxon>Eukaryota</taxon>
        <taxon>Fungi</taxon>
        <taxon>Dikarya</taxon>
        <taxon>Ascomycota</taxon>
        <taxon>Pezizomycotina</taxon>
        <taxon>Sordariomycetes</taxon>
        <taxon>Sordariomycetidae</taxon>
        <taxon>Diaporthales</taxon>
        <taxon>Diaporthaceae</taxon>
        <taxon>Diaporthe</taxon>
    </lineage>
</organism>
<proteinExistence type="inferred from homology"/>
<gene>
    <name evidence="3" type="primary">PhomC'</name>
    <name evidence="2" type="synonym">PhomC</name>
</gene>
<protein>
    <recommendedName>
        <fullName evidence="3">Phomopsin biosynthesis cluster protein C'</fullName>
    </recommendedName>
</protein>